<evidence type="ECO:0000255" key="1">
    <source>
        <dbReference type="HAMAP-Rule" id="MF_00461"/>
    </source>
</evidence>
<evidence type="ECO:0000256" key="2">
    <source>
        <dbReference type="SAM" id="MobiDB-lite"/>
    </source>
</evidence>
<protein>
    <recommendedName>
        <fullName evidence="1">Ion-translocating oxidoreductase complex subunit C</fullName>
        <ecNumber evidence="1">7.-.-.-</ecNumber>
    </recommendedName>
    <alternativeName>
        <fullName evidence="1">Rsx electron transport complex subunit C</fullName>
    </alternativeName>
</protein>
<sequence>MLKLFSAFRKNKIWDFNGGIHPPEMKTQSNGTPLRQVPLAQRFVIPLKQHIGAEGELCVSVGDKVLRGQPLTRGRGKMLPVHAPTSGTVTAIAPHSTAHPSALAELSVIIDADGEDCWIPRDGWADYRSRSREELIERIHQFGVAGLGGAGFPTGVKLQGGGDKIETLIINAAECEPYITADDRLMQDCAAQVVEGIRILAHILQPREILIGIEDNKPQAISMLRAVLADSHDISLRVIPTKYPSGGAKQLTYILTGKQVPHGGRSSDIGVLMQNVGTAYAVKRAVIDGEPITERVVTLTGEAIARPGNVWARLGTPVRHLLNDAGFCPSADQMVIMGGPLMGFTLPWLDVPVVKITNCLLAPSANELGEPQEEQSCIRCSACADACPADLLPQQLYWFSKGQQHDKATTHNIADCIECGACAWVCPSNIPLVQYFRQEKAEIAAIRQEEKRAAEAKARFEARQARLEREKAARLERHKSAAVQPAAKDKDAIAAALARVKEKQAQATQPIVIKAGERPDNSAIIAAREARKAQARAKQAELQQTNDAATVADPRKTAVEAAIARAKARKLEQQQANAEPEEQIDPRKAAVEAAIARAKARKLEQQQANAEPEEQIDPRKAAVEAAIARAKARKLEQQQANAEPEEQIDPRKAAVEAAIARAKARKLEQQQANAEPEEQIDPRKAAVAAAIARVQAKKAAQQKVVNED</sequence>
<feature type="chain" id="PRO_1000194517" description="Ion-translocating oxidoreductase complex subunit C">
    <location>
        <begin position="1"/>
        <end position="708"/>
    </location>
</feature>
<feature type="domain" description="4Fe-4S ferredoxin-type 1" evidence="1">
    <location>
        <begin position="369"/>
        <end position="397"/>
    </location>
</feature>
<feature type="domain" description="4Fe-4S ferredoxin-type 2" evidence="1">
    <location>
        <begin position="407"/>
        <end position="436"/>
    </location>
</feature>
<feature type="region of interest" description="Disordered" evidence="2">
    <location>
        <begin position="630"/>
        <end position="682"/>
    </location>
</feature>
<feature type="binding site" evidence="1">
    <location>
        <position position="377"/>
    </location>
    <ligand>
        <name>[4Fe-4S] cluster</name>
        <dbReference type="ChEBI" id="CHEBI:49883"/>
        <label>1</label>
    </ligand>
</feature>
<feature type="binding site" evidence="1">
    <location>
        <position position="380"/>
    </location>
    <ligand>
        <name>[4Fe-4S] cluster</name>
        <dbReference type="ChEBI" id="CHEBI:49883"/>
        <label>1</label>
    </ligand>
</feature>
<feature type="binding site" evidence="1">
    <location>
        <position position="383"/>
    </location>
    <ligand>
        <name>[4Fe-4S] cluster</name>
        <dbReference type="ChEBI" id="CHEBI:49883"/>
        <label>1</label>
    </ligand>
</feature>
<feature type="binding site" evidence="1">
    <location>
        <position position="387"/>
    </location>
    <ligand>
        <name>[4Fe-4S] cluster</name>
        <dbReference type="ChEBI" id="CHEBI:49883"/>
        <label>2</label>
    </ligand>
</feature>
<feature type="binding site" evidence="1">
    <location>
        <position position="416"/>
    </location>
    <ligand>
        <name>[4Fe-4S] cluster</name>
        <dbReference type="ChEBI" id="CHEBI:49883"/>
        <label>2</label>
    </ligand>
</feature>
<feature type="binding site" evidence="1">
    <location>
        <position position="419"/>
    </location>
    <ligand>
        <name>[4Fe-4S] cluster</name>
        <dbReference type="ChEBI" id="CHEBI:49883"/>
        <label>2</label>
    </ligand>
</feature>
<feature type="binding site" evidence="1">
    <location>
        <position position="422"/>
    </location>
    <ligand>
        <name>[4Fe-4S] cluster</name>
        <dbReference type="ChEBI" id="CHEBI:49883"/>
        <label>2</label>
    </ligand>
</feature>
<feature type="binding site" evidence="1">
    <location>
        <position position="426"/>
    </location>
    <ligand>
        <name>[4Fe-4S] cluster</name>
        <dbReference type="ChEBI" id="CHEBI:49883"/>
        <label>1</label>
    </ligand>
</feature>
<accession>B7MVA7</accession>
<proteinExistence type="inferred from homology"/>
<organism>
    <name type="scientific">Escherichia coli O81 (strain ED1a)</name>
    <dbReference type="NCBI Taxonomy" id="585397"/>
    <lineage>
        <taxon>Bacteria</taxon>
        <taxon>Pseudomonadati</taxon>
        <taxon>Pseudomonadota</taxon>
        <taxon>Gammaproteobacteria</taxon>
        <taxon>Enterobacterales</taxon>
        <taxon>Enterobacteriaceae</taxon>
        <taxon>Escherichia</taxon>
    </lineage>
</organism>
<comment type="function">
    <text evidence="1">Part of a membrane-bound complex that couples electron transfer with translocation of ions across the membrane. Required to maintain the reduced state of SoxR.</text>
</comment>
<comment type="cofactor">
    <cofactor evidence="1">
        <name>[4Fe-4S] cluster</name>
        <dbReference type="ChEBI" id="CHEBI:49883"/>
    </cofactor>
    <text evidence="1">Binds 2 [4Fe-4S] clusters per subunit.</text>
</comment>
<comment type="subunit">
    <text evidence="1">The complex is composed of six subunits: RsxA, RsxB, RsxC, RsxD, RsxE and RsxG.</text>
</comment>
<comment type="subcellular location">
    <subcellularLocation>
        <location evidence="1">Cell inner membrane</location>
        <topology evidence="1">Peripheral membrane protein</topology>
    </subcellularLocation>
</comment>
<comment type="similarity">
    <text evidence="1">Belongs to the 4Fe4S bacterial-type ferredoxin family. RnfC subfamily.</text>
</comment>
<name>RSXC_ECO81</name>
<dbReference type="EC" id="7.-.-.-" evidence="1"/>
<dbReference type="EMBL" id="CU928162">
    <property type="protein sequence ID" value="CAR08023.2"/>
    <property type="molecule type" value="Genomic_DNA"/>
</dbReference>
<dbReference type="RefSeq" id="WP_000915721.1">
    <property type="nucleotide sequence ID" value="NC_011745.1"/>
</dbReference>
<dbReference type="SMR" id="B7MVA7"/>
<dbReference type="KEGG" id="ecq:ECED1_1830"/>
<dbReference type="HOGENOM" id="CLU_010808_2_1_6"/>
<dbReference type="Proteomes" id="UP000000748">
    <property type="component" value="Chromosome"/>
</dbReference>
<dbReference type="GO" id="GO:0005886">
    <property type="term" value="C:plasma membrane"/>
    <property type="evidence" value="ECO:0007669"/>
    <property type="project" value="UniProtKB-SubCell"/>
</dbReference>
<dbReference type="GO" id="GO:0051539">
    <property type="term" value="F:4 iron, 4 sulfur cluster binding"/>
    <property type="evidence" value="ECO:0007669"/>
    <property type="project" value="UniProtKB-KW"/>
</dbReference>
<dbReference type="GO" id="GO:0009055">
    <property type="term" value="F:electron transfer activity"/>
    <property type="evidence" value="ECO:0007669"/>
    <property type="project" value="InterPro"/>
</dbReference>
<dbReference type="GO" id="GO:0046872">
    <property type="term" value="F:metal ion binding"/>
    <property type="evidence" value="ECO:0007669"/>
    <property type="project" value="UniProtKB-KW"/>
</dbReference>
<dbReference type="GO" id="GO:0022900">
    <property type="term" value="P:electron transport chain"/>
    <property type="evidence" value="ECO:0007669"/>
    <property type="project" value="UniProtKB-UniRule"/>
</dbReference>
<dbReference type="Gene3D" id="3.30.70.20">
    <property type="match status" value="1"/>
</dbReference>
<dbReference type="Gene3D" id="3.40.50.11540">
    <property type="entry name" value="NADH-ubiquinone oxidoreductase 51kDa subunit"/>
    <property type="match status" value="1"/>
</dbReference>
<dbReference type="HAMAP" id="MF_00461">
    <property type="entry name" value="RsxC_RnfC"/>
    <property type="match status" value="1"/>
</dbReference>
<dbReference type="InterPro" id="IPR017896">
    <property type="entry name" value="4Fe4S_Fe-S-bd"/>
</dbReference>
<dbReference type="InterPro" id="IPR017900">
    <property type="entry name" value="4Fe4S_Fe_S_CS"/>
</dbReference>
<dbReference type="InterPro" id="IPR010208">
    <property type="entry name" value="Ion_transpt_RnfC/RsxC"/>
</dbReference>
<dbReference type="InterPro" id="IPR011538">
    <property type="entry name" value="Nuo51_FMN-bd"/>
</dbReference>
<dbReference type="InterPro" id="IPR037225">
    <property type="entry name" value="Nuo51_FMN-bd_sf"/>
</dbReference>
<dbReference type="InterPro" id="IPR026902">
    <property type="entry name" value="RnfC_N"/>
</dbReference>
<dbReference type="InterPro" id="IPR019554">
    <property type="entry name" value="Soluble_ligand-bd"/>
</dbReference>
<dbReference type="NCBIfam" id="NF003454">
    <property type="entry name" value="PRK05035.1"/>
    <property type="match status" value="1"/>
</dbReference>
<dbReference type="NCBIfam" id="TIGR01945">
    <property type="entry name" value="rnfC"/>
    <property type="match status" value="1"/>
</dbReference>
<dbReference type="PANTHER" id="PTHR43034">
    <property type="entry name" value="ION-TRANSLOCATING OXIDOREDUCTASE COMPLEX SUBUNIT C"/>
    <property type="match status" value="1"/>
</dbReference>
<dbReference type="PANTHER" id="PTHR43034:SF2">
    <property type="entry name" value="ION-TRANSLOCATING OXIDOREDUCTASE COMPLEX SUBUNIT C"/>
    <property type="match status" value="1"/>
</dbReference>
<dbReference type="Pfam" id="PF01512">
    <property type="entry name" value="Complex1_51K"/>
    <property type="match status" value="1"/>
</dbReference>
<dbReference type="Pfam" id="PF12838">
    <property type="entry name" value="Fer4_7"/>
    <property type="match status" value="1"/>
</dbReference>
<dbReference type="Pfam" id="PF13375">
    <property type="entry name" value="RnfC_N"/>
    <property type="match status" value="1"/>
</dbReference>
<dbReference type="Pfam" id="PF10531">
    <property type="entry name" value="SLBB"/>
    <property type="match status" value="1"/>
</dbReference>
<dbReference type="SUPFAM" id="SSF46548">
    <property type="entry name" value="alpha-helical ferredoxin"/>
    <property type="match status" value="1"/>
</dbReference>
<dbReference type="SUPFAM" id="SSF142019">
    <property type="entry name" value="Nqo1 FMN-binding domain-like"/>
    <property type="match status" value="1"/>
</dbReference>
<dbReference type="PROSITE" id="PS00198">
    <property type="entry name" value="4FE4S_FER_1"/>
    <property type="match status" value="2"/>
</dbReference>
<dbReference type="PROSITE" id="PS51379">
    <property type="entry name" value="4FE4S_FER_2"/>
    <property type="match status" value="2"/>
</dbReference>
<gene>
    <name evidence="1" type="primary">rsxC</name>
    <name type="ordered locus">ECED1_1830</name>
</gene>
<reference key="1">
    <citation type="journal article" date="2009" name="PLoS Genet.">
        <title>Organised genome dynamics in the Escherichia coli species results in highly diverse adaptive paths.</title>
        <authorList>
            <person name="Touchon M."/>
            <person name="Hoede C."/>
            <person name="Tenaillon O."/>
            <person name="Barbe V."/>
            <person name="Baeriswyl S."/>
            <person name="Bidet P."/>
            <person name="Bingen E."/>
            <person name="Bonacorsi S."/>
            <person name="Bouchier C."/>
            <person name="Bouvet O."/>
            <person name="Calteau A."/>
            <person name="Chiapello H."/>
            <person name="Clermont O."/>
            <person name="Cruveiller S."/>
            <person name="Danchin A."/>
            <person name="Diard M."/>
            <person name="Dossat C."/>
            <person name="Karoui M.E."/>
            <person name="Frapy E."/>
            <person name="Garry L."/>
            <person name="Ghigo J.M."/>
            <person name="Gilles A.M."/>
            <person name="Johnson J."/>
            <person name="Le Bouguenec C."/>
            <person name="Lescat M."/>
            <person name="Mangenot S."/>
            <person name="Martinez-Jehanne V."/>
            <person name="Matic I."/>
            <person name="Nassif X."/>
            <person name="Oztas S."/>
            <person name="Petit M.A."/>
            <person name="Pichon C."/>
            <person name="Rouy Z."/>
            <person name="Ruf C.S."/>
            <person name="Schneider D."/>
            <person name="Tourret J."/>
            <person name="Vacherie B."/>
            <person name="Vallenet D."/>
            <person name="Medigue C."/>
            <person name="Rocha E.P.C."/>
            <person name="Denamur E."/>
        </authorList>
    </citation>
    <scope>NUCLEOTIDE SEQUENCE [LARGE SCALE GENOMIC DNA]</scope>
    <source>
        <strain>ED1a</strain>
    </source>
</reference>
<keyword id="KW-0004">4Fe-4S</keyword>
<keyword id="KW-0997">Cell inner membrane</keyword>
<keyword id="KW-1003">Cell membrane</keyword>
<keyword id="KW-0249">Electron transport</keyword>
<keyword id="KW-0408">Iron</keyword>
<keyword id="KW-0411">Iron-sulfur</keyword>
<keyword id="KW-0472">Membrane</keyword>
<keyword id="KW-0479">Metal-binding</keyword>
<keyword id="KW-0677">Repeat</keyword>
<keyword id="KW-1278">Translocase</keyword>
<keyword id="KW-0813">Transport</keyword>